<organism>
    <name type="scientific">Shouchella clausii (strain KSM-K16)</name>
    <name type="common">Alkalihalobacillus clausii</name>
    <dbReference type="NCBI Taxonomy" id="66692"/>
    <lineage>
        <taxon>Bacteria</taxon>
        <taxon>Bacillati</taxon>
        <taxon>Bacillota</taxon>
        <taxon>Bacilli</taxon>
        <taxon>Bacillales</taxon>
        <taxon>Bacillaceae</taxon>
        <taxon>Shouchella</taxon>
    </lineage>
</organism>
<name>ATPG_SHOC1</name>
<accession>Q5WB77</accession>
<protein>
    <recommendedName>
        <fullName evidence="1">ATP synthase gamma chain</fullName>
    </recommendedName>
    <alternativeName>
        <fullName evidence="1">ATP synthase F1 sector gamma subunit</fullName>
    </alternativeName>
    <alternativeName>
        <fullName evidence="1">F-ATPase gamma subunit</fullName>
    </alternativeName>
</protein>
<feature type="chain" id="PRO_0000073228" description="ATP synthase gamma chain">
    <location>
        <begin position="1"/>
        <end position="288"/>
    </location>
</feature>
<keyword id="KW-0066">ATP synthesis</keyword>
<keyword id="KW-1003">Cell membrane</keyword>
<keyword id="KW-0139">CF(1)</keyword>
<keyword id="KW-0375">Hydrogen ion transport</keyword>
<keyword id="KW-0406">Ion transport</keyword>
<keyword id="KW-0472">Membrane</keyword>
<keyword id="KW-1185">Reference proteome</keyword>
<keyword id="KW-0813">Transport</keyword>
<proteinExistence type="inferred from homology"/>
<gene>
    <name evidence="1" type="primary">atpG</name>
    <name type="ordered locus">ABC3852</name>
</gene>
<comment type="function">
    <text evidence="1">Produces ATP from ADP in the presence of a proton gradient across the membrane. The gamma chain is believed to be important in regulating ATPase activity and the flow of protons through the CF(0) complex.</text>
</comment>
<comment type="subunit">
    <text evidence="1">F-type ATPases have 2 components, CF(1) - the catalytic core - and CF(0) - the membrane proton channel. CF(1) has five subunits: alpha(3), beta(3), gamma(1), delta(1), epsilon(1). CF(0) has three main subunits: a, b and c.</text>
</comment>
<comment type="subcellular location">
    <subcellularLocation>
        <location evidence="1">Cell membrane</location>
        <topology evidence="1">Peripheral membrane protein</topology>
    </subcellularLocation>
</comment>
<comment type="similarity">
    <text evidence="1">Belongs to the ATPase gamma chain family.</text>
</comment>
<reference key="1">
    <citation type="submission" date="2003-10" db="EMBL/GenBank/DDBJ databases">
        <title>The complete genome sequence of the alkaliphilic Bacillus clausii KSM-K16.</title>
        <authorList>
            <person name="Takaki Y."/>
            <person name="Kageyama Y."/>
            <person name="Shimamura S."/>
            <person name="Suzuki H."/>
            <person name="Nishi S."/>
            <person name="Hatada Y."/>
            <person name="Kawai S."/>
            <person name="Ito S."/>
            <person name="Horikoshi K."/>
        </authorList>
    </citation>
    <scope>NUCLEOTIDE SEQUENCE [LARGE SCALE GENOMIC DNA]</scope>
    <source>
        <strain>KSM-K16</strain>
    </source>
</reference>
<sequence>MASLRDIKNRINSTKKTRQITKAMQMVSAAKLNRAQEKAQSYEVYAKKMREVVGNIAQAGSDTSHPMLEERPVKKTGYILMTSDTGLAGGYNSSLLRDMMKTINERHASEDEYAIIVLGRIGRDLLRTRKQPIIQEMVEVPDQPTFNDVSGLAKSSVEMFADGVFDELYIWYNHFVSPMTQRVTEQKLLPLASVNEGDETSSTSLYEFEPSEQQILEAVLPRYAESLIYGALLDAKASEFGARMTAMSAATDNASALIDELTLSYNRARQAAITQEITEIVGGAAALE</sequence>
<dbReference type="EMBL" id="AP006627">
    <property type="protein sequence ID" value="BAD66383.1"/>
    <property type="molecule type" value="Genomic_DNA"/>
</dbReference>
<dbReference type="RefSeq" id="WP_011248686.1">
    <property type="nucleotide sequence ID" value="NC_006582.1"/>
</dbReference>
<dbReference type="SMR" id="Q5WB77"/>
<dbReference type="STRING" id="66692.ABC3852"/>
<dbReference type="KEGG" id="bcl:ABC3852"/>
<dbReference type="eggNOG" id="COG0224">
    <property type="taxonomic scope" value="Bacteria"/>
</dbReference>
<dbReference type="HOGENOM" id="CLU_050669_0_1_9"/>
<dbReference type="OrthoDB" id="9812769at2"/>
<dbReference type="Proteomes" id="UP000001168">
    <property type="component" value="Chromosome"/>
</dbReference>
<dbReference type="GO" id="GO:0005886">
    <property type="term" value="C:plasma membrane"/>
    <property type="evidence" value="ECO:0007669"/>
    <property type="project" value="UniProtKB-SubCell"/>
</dbReference>
<dbReference type="GO" id="GO:0045259">
    <property type="term" value="C:proton-transporting ATP synthase complex"/>
    <property type="evidence" value="ECO:0007669"/>
    <property type="project" value="UniProtKB-KW"/>
</dbReference>
<dbReference type="GO" id="GO:0005524">
    <property type="term" value="F:ATP binding"/>
    <property type="evidence" value="ECO:0007669"/>
    <property type="project" value="UniProtKB-UniRule"/>
</dbReference>
<dbReference type="GO" id="GO:0046933">
    <property type="term" value="F:proton-transporting ATP synthase activity, rotational mechanism"/>
    <property type="evidence" value="ECO:0007669"/>
    <property type="project" value="UniProtKB-UniRule"/>
</dbReference>
<dbReference type="GO" id="GO:0042777">
    <property type="term" value="P:proton motive force-driven plasma membrane ATP synthesis"/>
    <property type="evidence" value="ECO:0007669"/>
    <property type="project" value="UniProtKB-UniRule"/>
</dbReference>
<dbReference type="CDD" id="cd12151">
    <property type="entry name" value="F1-ATPase_gamma"/>
    <property type="match status" value="1"/>
</dbReference>
<dbReference type="FunFam" id="3.40.1380.10:FF:000002">
    <property type="entry name" value="ATP synthase gamma chain"/>
    <property type="match status" value="1"/>
</dbReference>
<dbReference type="Gene3D" id="3.40.1380.10">
    <property type="match status" value="1"/>
</dbReference>
<dbReference type="Gene3D" id="1.10.287.80">
    <property type="entry name" value="ATP synthase, gamma subunit, helix hairpin domain"/>
    <property type="match status" value="1"/>
</dbReference>
<dbReference type="HAMAP" id="MF_00815">
    <property type="entry name" value="ATP_synth_gamma_bact"/>
    <property type="match status" value="1"/>
</dbReference>
<dbReference type="InterPro" id="IPR035968">
    <property type="entry name" value="ATP_synth_F1_ATPase_gsu"/>
</dbReference>
<dbReference type="InterPro" id="IPR000131">
    <property type="entry name" value="ATP_synth_F1_gsu"/>
</dbReference>
<dbReference type="InterPro" id="IPR023632">
    <property type="entry name" value="ATP_synth_F1_gsu_CS"/>
</dbReference>
<dbReference type="NCBIfam" id="TIGR01146">
    <property type="entry name" value="ATPsyn_F1gamma"/>
    <property type="match status" value="1"/>
</dbReference>
<dbReference type="PANTHER" id="PTHR11693">
    <property type="entry name" value="ATP SYNTHASE GAMMA CHAIN"/>
    <property type="match status" value="1"/>
</dbReference>
<dbReference type="PANTHER" id="PTHR11693:SF22">
    <property type="entry name" value="ATP SYNTHASE SUBUNIT GAMMA, MITOCHONDRIAL"/>
    <property type="match status" value="1"/>
</dbReference>
<dbReference type="Pfam" id="PF00231">
    <property type="entry name" value="ATP-synt"/>
    <property type="match status" value="1"/>
</dbReference>
<dbReference type="PRINTS" id="PR00126">
    <property type="entry name" value="ATPASEGAMMA"/>
</dbReference>
<dbReference type="SUPFAM" id="SSF52943">
    <property type="entry name" value="ATP synthase (F1-ATPase), gamma subunit"/>
    <property type="match status" value="1"/>
</dbReference>
<dbReference type="PROSITE" id="PS00153">
    <property type="entry name" value="ATPASE_GAMMA"/>
    <property type="match status" value="1"/>
</dbReference>
<evidence type="ECO:0000255" key="1">
    <source>
        <dbReference type="HAMAP-Rule" id="MF_00815"/>
    </source>
</evidence>